<organism>
    <name type="scientific">Halothermothrix orenii (strain H 168 / OCM 544 / DSM 9562)</name>
    <dbReference type="NCBI Taxonomy" id="373903"/>
    <lineage>
        <taxon>Bacteria</taxon>
        <taxon>Bacillati</taxon>
        <taxon>Bacillota</taxon>
        <taxon>Clostridia</taxon>
        <taxon>Halanaerobiales</taxon>
        <taxon>Halothermotrichaceae</taxon>
        <taxon>Halothermothrix</taxon>
    </lineage>
</organism>
<sequence>MNNFMKNIGFYLVLIALSILVAQFFVDTDVNTIVDTDVNTIKDFTYSDLINYVEQGKINEVTIIGNEAVKGTYNHREFNVPIPPEAVPDLMAELREADVEIKTEPEPTAPWWTGMLAYILPIILLIGAWFFIMQRMQGGGSQMMSFGKSRARLSENGKKVTFEDVANYEEVKEELQEVVEFLKNPDKFTRMGAKVPKGVLLVGPPGTGKTLLARAVAGEAGVPFFIISGSDFVEMFVGVGASRVRDLFEQGKKNAPCIIFIDELDAVGRQRGAGLGGGHDEREQTLNQLLVEMDGFEPNEGIIVMAATNRPDVLDPALLRPGRFDRQVVVDKPDVKGRMGILKIHLRNKPVADDVDVEVLAKRTPGFTGADMENLANEAAILAVRRRKNKITMEDFDDAIDKVIAGPAKKSKVMSERERKLVAYHETGHALVGDLLEHADRTHKISIVPRGRAGGMRWALPKEDKNFMSKQELLDQITVLLGGRASESIFLEDISTGAQNDLERATKLARAMVTEYGMSEKLGPLTLGHKHDEQIFLGRDISRQRNYSEEIAAEIDKEVSSIIEYCYQRAEKILQENTAKVERIVRELLDRETLDAEQLQKLIKGEPLDDDSIDNSTDENENREHENNDK</sequence>
<proteinExistence type="inferred from homology"/>
<gene>
    <name evidence="1" type="primary">ftsH</name>
    <name type="ordered locus">Hore_00580</name>
</gene>
<name>FTSH_HALOH</name>
<reference key="1">
    <citation type="journal article" date="2009" name="PLoS ONE">
        <title>Genome analysis of the anaerobic thermohalophilic bacterium Halothermothrix orenii.</title>
        <authorList>
            <person name="Mavromatis K."/>
            <person name="Ivanova N."/>
            <person name="Anderson I."/>
            <person name="Lykidis A."/>
            <person name="Hooper S.D."/>
            <person name="Sun H."/>
            <person name="Kunin V."/>
            <person name="Lapidus A."/>
            <person name="Hugenholtz P."/>
            <person name="Patel B."/>
            <person name="Kyrpides N.C."/>
        </authorList>
    </citation>
    <scope>NUCLEOTIDE SEQUENCE [LARGE SCALE GENOMIC DNA]</scope>
    <source>
        <strain>H 168 / OCM 544 / DSM 9562</strain>
    </source>
</reference>
<accession>B8D065</accession>
<feature type="chain" id="PRO_0000400343" description="ATP-dependent zinc metalloprotease FtsH">
    <location>
        <begin position="1"/>
        <end position="630"/>
    </location>
</feature>
<feature type="topological domain" description="Cytoplasmic" evidence="1">
    <location>
        <begin position="1"/>
        <end position="7"/>
    </location>
</feature>
<feature type="transmembrane region" description="Helical" evidence="1">
    <location>
        <begin position="8"/>
        <end position="28"/>
    </location>
</feature>
<feature type="topological domain" description="Periplasmic" evidence="1">
    <location>
        <begin position="29"/>
        <end position="111"/>
    </location>
</feature>
<feature type="transmembrane region" description="Helical" evidence="1">
    <location>
        <begin position="112"/>
        <end position="132"/>
    </location>
</feature>
<feature type="topological domain" description="Cytoplasmic" evidence="1">
    <location>
        <begin position="133"/>
        <end position="630"/>
    </location>
</feature>
<feature type="region of interest" description="Disordered" evidence="2">
    <location>
        <begin position="601"/>
        <end position="630"/>
    </location>
</feature>
<feature type="compositionally biased region" description="Acidic residues" evidence="2">
    <location>
        <begin position="608"/>
        <end position="619"/>
    </location>
</feature>
<feature type="compositionally biased region" description="Basic and acidic residues" evidence="2">
    <location>
        <begin position="620"/>
        <end position="630"/>
    </location>
</feature>
<feature type="active site" evidence="1">
    <location>
        <position position="426"/>
    </location>
</feature>
<feature type="binding site" evidence="1">
    <location>
        <begin position="203"/>
        <end position="210"/>
    </location>
    <ligand>
        <name>ATP</name>
        <dbReference type="ChEBI" id="CHEBI:30616"/>
    </ligand>
</feature>
<feature type="binding site" evidence="1">
    <location>
        <position position="425"/>
    </location>
    <ligand>
        <name>Zn(2+)</name>
        <dbReference type="ChEBI" id="CHEBI:29105"/>
        <note>catalytic</note>
    </ligand>
</feature>
<feature type="binding site" evidence="1">
    <location>
        <position position="429"/>
    </location>
    <ligand>
        <name>Zn(2+)</name>
        <dbReference type="ChEBI" id="CHEBI:29105"/>
        <note>catalytic</note>
    </ligand>
</feature>
<feature type="binding site" evidence="1">
    <location>
        <position position="501"/>
    </location>
    <ligand>
        <name>Zn(2+)</name>
        <dbReference type="ChEBI" id="CHEBI:29105"/>
        <note>catalytic</note>
    </ligand>
</feature>
<dbReference type="EC" id="3.4.24.-" evidence="1"/>
<dbReference type="EMBL" id="CP001098">
    <property type="protein sequence ID" value="ACL68819.1"/>
    <property type="molecule type" value="Genomic_DNA"/>
</dbReference>
<dbReference type="RefSeq" id="WP_012635018.1">
    <property type="nucleotide sequence ID" value="NC_011899.1"/>
</dbReference>
<dbReference type="SMR" id="B8D065"/>
<dbReference type="STRING" id="373903.Hore_00580"/>
<dbReference type="MEROPS" id="M41.009"/>
<dbReference type="KEGG" id="hor:Hore_00580"/>
<dbReference type="eggNOG" id="COG0465">
    <property type="taxonomic scope" value="Bacteria"/>
</dbReference>
<dbReference type="HOGENOM" id="CLU_000688_16_2_9"/>
<dbReference type="OrthoDB" id="9809379at2"/>
<dbReference type="Proteomes" id="UP000000719">
    <property type="component" value="Chromosome"/>
</dbReference>
<dbReference type="GO" id="GO:0005886">
    <property type="term" value="C:plasma membrane"/>
    <property type="evidence" value="ECO:0007669"/>
    <property type="project" value="UniProtKB-SubCell"/>
</dbReference>
<dbReference type="GO" id="GO:0005524">
    <property type="term" value="F:ATP binding"/>
    <property type="evidence" value="ECO:0007669"/>
    <property type="project" value="UniProtKB-UniRule"/>
</dbReference>
<dbReference type="GO" id="GO:0016887">
    <property type="term" value="F:ATP hydrolysis activity"/>
    <property type="evidence" value="ECO:0007669"/>
    <property type="project" value="UniProtKB-UniRule"/>
</dbReference>
<dbReference type="GO" id="GO:0004176">
    <property type="term" value="F:ATP-dependent peptidase activity"/>
    <property type="evidence" value="ECO:0007669"/>
    <property type="project" value="InterPro"/>
</dbReference>
<dbReference type="GO" id="GO:0004222">
    <property type="term" value="F:metalloendopeptidase activity"/>
    <property type="evidence" value="ECO:0007669"/>
    <property type="project" value="InterPro"/>
</dbReference>
<dbReference type="GO" id="GO:0008270">
    <property type="term" value="F:zinc ion binding"/>
    <property type="evidence" value="ECO:0007669"/>
    <property type="project" value="UniProtKB-UniRule"/>
</dbReference>
<dbReference type="GO" id="GO:0030163">
    <property type="term" value="P:protein catabolic process"/>
    <property type="evidence" value="ECO:0007669"/>
    <property type="project" value="UniProtKB-UniRule"/>
</dbReference>
<dbReference type="GO" id="GO:0006508">
    <property type="term" value="P:proteolysis"/>
    <property type="evidence" value="ECO:0007669"/>
    <property type="project" value="UniProtKB-KW"/>
</dbReference>
<dbReference type="CDD" id="cd19501">
    <property type="entry name" value="RecA-like_FtsH"/>
    <property type="match status" value="1"/>
</dbReference>
<dbReference type="FunFam" id="1.10.8.60:FF:000001">
    <property type="entry name" value="ATP-dependent zinc metalloprotease FtsH"/>
    <property type="match status" value="1"/>
</dbReference>
<dbReference type="FunFam" id="1.20.58.760:FF:000001">
    <property type="entry name" value="ATP-dependent zinc metalloprotease FtsH"/>
    <property type="match status" value="1"/>
</dbReference>
<dbReference type="FunFam" id="3.40.50.300:FF:000001">
    <property type="entry name" value="ATP-dependent zinc metalloprotease FtsH"/>
    <property type="match status" value="1"/>
</dbReference>
<dbReference type="Gene3D" id="1.10.8.60">
    <property type="match status" value="1"/>
</dbReference>
<dbReference type="Gene3D" id="3.30.720.210">
    <property type="match status" value="1"/>
</dbReference>
<dbReference type="Gene3D" id="3.40.50.300">
    <property type="entry name" value="P-loop containing nucleotide triphosphate hydrolases"/>
    <property type="match status" value="1"/>
</dbReference>
<dbReference type="Gene3D" id="1.20.58.760">
    <property type="entry name" value="Peptidase M41"/>
    <property type="match status" value="1"/>
</dbReference>
<dbReference type="HAMAP" id="MF_01458">
    <property type="entry name" value="FtsH"/>
    <property type="match status" value="1"/>
</dbReference>
<dbReference type="InterPro" id="IPR003593">
    <property type="entry name" value="AAA+_ATPase"/>
</dbReference>
<dbReference type="InterPro" id="IPR041569">
    <property type="entry name" value="AAA_lid_3"/>
</dbReference>
<dbReference type="InterPro" id="IPR003959">
    <property type="entry name" value="ATPase_AAA_core"/>
</dbReference>
<dbReference type="InterPro" id="IPR003960">
    <property type="entry name" value="ATPase_AAA_CS"/>
</dbReference>
<dbReference type="InterPro" id="IPR005936">
    <property type="entry name" value="FtsH"/>
</dbReference>
<dbReference type="InterPro" id="IPR027417">
    <property type="entry name" value="P-loop_NTPase"/>
</dbReference>
<dbReference type="InterPro" id="IPR011546">
    <property type="entry name" value="Pept_M41_FtsH_extracell"/>
</dbReference>
<dbReference type="InterPro" id="IPR000642">
    <property type="entry name" value="Peptidase_M41"/>
</dbReference>
<dbReference type="InterPro" id="IPR037219">
    <property type="entry name" value="Peptidase_M41-like"/>
</dbReference>
<dbReference type="NCBIfam" id="TIGR01241">
    <property type="entry name" value="FtsH_fam"/>
    <property type="match status" value="1"/>
</dbReference>
<dbReference type="PANTHER" id="PTHR23076:SF113">
    <property type="entry name" value="ATP-DEPENDENT ZINC METALLOPROTEASE FTSH 1, CHLOROPLASTIC-RELATED"/>
    <property type="match status" value="1"/>
</dbReference>
<dbReference type="PANTHER" id="PTHR23076">
    <property type="entry name" value="METALLOPROTEASE M41 FTSH"/>
    <property type="match status" value="1"/>
</dbReference>
<dbReference type="Pfam" id="PF00004">
    <property type="entry name" value="AAA"/>
    <property type="match status" value="1"/>
</dbReference>
<dbReference type="Pfam" id="PF17862">
    <property type="entry name" value="AAA_lid_3"/>
    <property type="match status" value="1"/>
</dbReference>
<dbReference type="Pfam" id="PF06480">
    <property type="entry name" value="FtsH_ext"/>
    <property type="match status" value="1"/>
</dbReference>
<dbReference type="Pfam" id="PF01434">
    <property type="entry name" value="Peptidase_M41"/>
    <property type="match status" value="1"/>
</dbReference>
<dbReference type="SMART" id="SM00382">
    <property type="entry name" value="AAA"/>
    <property type="match status" value="1"/>
</dbReference>
<dbReference type="SUPFAM" id="SSF140990">
    <property type="entry name" value="FtsH protease domain-like"/>
    <property type="match status" value="1"/>
</dbReference>
<dbReference type="SUPFAM" id="SSF52540">
    <property type="entry name" value="P-loop containing nucleoside triphosphate hydrolases"/>
    <property type="match status" value="1"/>
</dbReference>
<dbReference type="PROSITE" id="PS00674">
    <property type="entry name" value="AAA"/>
    <property type="match status" value="1"/>
</dbReference>
<comment type="function">
    <text evidence="1">Acts as a processive, ATP-dependent zinc metallopeptidase for both cytoplasmic and membrane proteins. Plays a role in the quality control of integral membrane proteins.</text>
</comment>
<comment type="cofactor">
    <cofactor evidence="1">
        <name>Zn(2+)</name>
        <dbReference type="ChEBI" id="CHEBI:29105"/>
    </cofactor>
    <text evidence="1">Binds 1 zinc ion per subunit.</text>
</comment>
<comment type="subunit">
    <text evidence="1">Homohexamer.</text>
</comment>
<comment type="subcellular location">
    <subcellularLocation>
        <location evidence="1">Cell inner membrane</location>
        <topology evidence="1">Multi-pass membrane protein</topology>
        <orientation evidence="1">Cytoplasmic side</orientation>
    </subcellularLocation>
</comment>
<comment type="similarity">
    <text evidence="1">In the central section; belongs to the AAA ATPase family.</text>
</comment>
<comment type="similarity">
    <text evidence="1">In the C-terminal section; belongs to the peptidase M41 family.</text>
</comment>
<protein>
    <recommendedName>
        <fullName evidence="1">ATP-dependent zinc metalloprotease FtsH</fullName>
        <ecNumber evidence="1">3.4.24.-</ecNumber>
    </recommendedName>
</protein>
<keyword id="KW-0067">ATP-binding</keyword>
<keyword id="KW-0997">Cell inner membrane</keyword>
<keyword id="KW-1003">Cell membrane</keyword>
<keyword id="KW-0378">Hydrolase</keyword>
<keyword id="KW-0472">Membrane</keyword>
<keyword id="KW-0479">Metal-binding</keyword>
<keyword id="KW-0482">Metalloprotease</keyword>
<keyword id="KW-0547">Nucleotide-binding</keyword>
<keyword id="KW-0645">Protease</keyword>
<keyword id="KW-1185">Reference proteome</keyword>
<keyword id="KW-0812">Transmembrane</keyword>
<keyword id="KW-1133">Transmembrane helix</keyword>
<keyword id="KW-0862">Zinc</keyword>
<evidence type="ECO:0000255" key="1">
    <source>
        <dbReference type="HAMAP-Rule" id="MF_01458"/>
    </source>
</evidence>
<evidence type="ECO:0000256" key="2">
    <source>
        <dbReference type="SAM" id="MobiDB-lite"/>
    </source>
</evidence>